<reference key="1">
    <citation type="journal article" date="2005" name="Nucleic Acids Res.">
        <title>Genome dynamics and diversity of Shigella species, the etiologic agents of bacillary dysentery.</title>
        <authorList>
            <person name="Yang F."/>
            <person name="Yang J."/>
            <person name="Zhang X."/>
            <person name="Chen L."/>
            <person name="Jiang Y."/>
            <person name="Yan Y."/>
            <person name="Tang X."/>
            <person name="Wang J."/>
            <person name="Xiong Z."/>
            <person name="Dong J."/>
            <person name="Xue Y."/>
            <person name="Zhu Y."/>
            <person name="Xu X."/>
            <person name="Sun L."/>
            <person name="Chen S."/>
            <person name="Nie H."/>
            <person name="Peng J."/>
            <person name="Xu J."/>
            <person name="Wang Y."/>
            <person name="Yuan Z."/>
            <person name="Wen Y."/>
            <person name="Yao Z."/>
            <person name="Shen Y."/>
            <person name="Qiang B."/>
            <person name="Hou Y."/>
            <person name="Yu J."/>
            <person name="Jin Q."/>
        </authorList>
    </citation>
    <scope>NUCLEOTIDE SEQUENCE [LARGE SCALE GENOMIC DNA]</scope>
    <source>
        <strain>Sb227</strain>
    </source>
</reference>
<dbReference type="EC" id="5.2.1.8" evidence="1"/>
<dbReference type="EMBL" id="CP000036">
    <property type="protein sequence ID" value="ABB65043.1"/>
    <property type="molecule type" value="Genomic_DNA"/>
</dbReference>
<dbReference type="RefSeq" id="WP_001198394.1">
    <property type="nucleotide sequence ID" value="NC_007613.1"/>
</dbReference>
<dbReference type="SMR" id="Q325G5"/>
<dbReference type="KEGG" id="sbo:SBO_0330"/>
<dbReference type="HOGENOM" id="CLU_033058_2_0_6"/>
<dbReference type="Proteomes" id="UP000007067">
    <property type="component" value="Chromosome"/>
</dbReference>
<dbReference type="GO" id="GO:0005737">
    <property type="term" value="C:cytoplasm"/>
    <property type="evidence" value="ECO:0007669"/>
    <property type="project" value="UniProtKB-SubCell"/>
</dbReference>
<dbReference type="GO" id="GO:0003755">
    <property type="term" value="F:peptidyl-prolyl cis-trans isomerase activity"/>
    <property type="evidence" value="ECO:0007669"/>
    <property type="project" value="UniProtKB-UniRule"/>
</dbReference>
<dbReference type="GO" id="GO:0044183">
    <property type="term" value="F:protein folding chaperone"/>
    <property type="evidence" value="ECO:0007669"/>
    <property type="project" value="TreeGrafter"/>
</dbReference>
<dbReference type="GO" id="GO:0043022">
    <property type="term" value="F:ribosome binding"/>
    <property type="evidence" value="ECO:0007669"/>
    <property type="project" value="TreeGrafter"/>
</dbReference>
<dbReference type="GO" id="GO:0051083">
    <property type="term" value="P:'de novo' cotranslational protein folding"/>
    <property type="evidence" value="ECO:0007669"/>
    <property type="project" value="TreeGrafter"/>
</dbReference>
<dbReference type="GO" id="GO:0051301">
    <property type="term" value="P:cell division"/>
    <property type="evidence" value="ECO:0007669"/>
    <property type="project" value="UniProtKB-KW"/>
</dbReference>
<dbReference type="GO" id="GO:0061077">
    <property type="term" value="P:chaperone-mediated protein folding"/>
    <property type="evidence" value="ECO:0007669"/>
    <property type="project" value="TreeGrafter"/>
</dbReference>
<dbReference type="GO" id="GO:0015031">
    <property type="term" value="P:protein transport"/>
    <property type="evidence" value="ECO:0007669"/>
    <property type="project" value="UniProtKB-UniRule"/>
</dbReference>
<dbReference type="GO" id="GO:0043335">
    <property type="term" value="P:protein unfolding"/>
    <property type="evidence" value="ECO:0007669"/>
    <property type="project" value="TreeGrafter"/>
</dbReference>
<dbReference type="FunFam" id="1.10.3120.10:FF:000001">
    <property type="entry name" value="Trigger factor"/>
    <property type="match status" value="1"/>
</dbReference>
<dbReference type="FunFam" id="3.10.50.40:FF:000001">
    <property type="entry name" value="Trigger factor"/>
    <property type="match status" value="1"/>
</dbReference>
<dbReference type="FunFam" id="3.30.70.1050:FF:000001">
    <property type="entry name" value="Trigger factor"/>
    <property type="match status" value="1"/>
</dbReference>
<dbReference type="Gene3D" id="3.10.50.40">
    <property type="match status" value="1"/>
</dbReference>
<dbReference type="Gene3D" id="3.30.70.1050">
    <property type="entry name" value="Trigger factor ribosome-binding domain"/>
    <property type="match status" value="1"/>
</dbReference>
<dbReference type="Gene3D" id="1.10.3120.10">
    <property type="entry name" value="Trigger factor, C-terminal domain"/>
    <property type="match status" value="1"/>
</dbReference>
<dbReference type="HAMAP" id="MF_00303">
    <property type="entry name" value="Trigger_factor_Tig"/>
    <property type="match status" value="1"/>
</dbReference>
<dbReference type="InterPro" id="IPR046357">
    <property type="entry name" value="PPIase_dom_sf"/>
</dbReference>
<dbReference type="InterPro" id="IPR001179">
    <property type="entry name" value="PPIase_FKBP_dom"/>
</dbReference>
<dbReference type="InterPro" id="IPR005215">
    <property type="entry name" value="Trig_fac"/>
</dbReference>
<dbReference type="InterPro" id="IPR008880">
    <property type="entry name" value="Trigger_fac_C"/>
</dbReference>
<dbReference type="InterPro" id="IPR037041">
    <property type="entry name" value="Trigger_fac_C_sf"/>
</dbReference>
<dbReference type="InterPro" id="IPR008881">
    <property type="entry name" value="Trigger_fac_ribosome-bd_bac"/>
</dbReference>
<dbReference type="InterPro" id="IPR036611">
    <property type="entry name" value="Trigger_fac_ribosome-bd_sf"/>
</dbReference>
<dbReference type="InterPro" id="IPR027304">
    <property type="entry name" value="Trigger_fact/SurA_dom_sf"/>
</dbReference>
<dbReference type="NCBIfam" id="TIGR00115">
    <property type="entry name" value="tig"/>
    <property type="match status" value="1"/>
</dbReference>
<dbReference type="PANTHER" id="PTHR30560">
    <property type="entry name" value="TRIGGER FACTOR CHAPERONE AND PEPTIDYL-PROLYL CIS/TRANS ISOMERASE"/>
    <property type="match status" value="1"/>
</dbReference>
<dbReference type="PANTHER" id="PTHR30560:SF3">
    <property type="entry name" value="TRIGGER FACTOR-LIKE PROTEIN TIG, CHLOROPLASTIC"/>
    <property type="match status" value="1"/>
</dbReference>
<dbReference type="Pfam" id="PF00254">
    <property type="entry name" value="FKBP_C"/>
    <property type="match status" value="1"/>
</dbReference>
<dbReference type="Pfam" id="PF05698">
    <property type="entry name" value="Trigger_C"/>
    <property type="match status" value="1"/>
</dbReference>
<dbReference type="Pfam" id="PF05697">
    <property type="entry name" value="Trigger_N"/>
    <property type="match status" value="1"/>
</dbReference>
<dbReference type="PIRSF" id="PIRSF003095">
    <property type="entry name" value="Trigger_factor"/>
    <property type="match status" value="1"/>
</dbReference>
<dbReference type="SUPFAM" id="SSF54534">
    <property type="entry name" value="FKBP-like"/>
    <property type="match status" value="1"/>
</dbReference>
<dbReference type="SUPFAM" id="SSF109998">
    <property type="entry name" value="Triger factor/SurA peptide-binding domain-like"/>
    <property type="match status" value="1"/>
</dbReference>
<dbReference type="SUPFAM" id="SSF102735">
    <property type="entry name" value="Trigger factor ribosome-binding domain"/>
    <property type="match status" value="1"/>
</dbReference>
<dbReference type="PROSITE" id="PS50059">
    <property type="entry name" value="FKBP_PPIASE"/>
    <property type="match status" value="1"/>
</dbReference>
<organism>
    <name type="scientific">Shigella boydii serotype 4 (strain Sb227)</name>
    <dbReference type="NCBI Taxonomy" id="300268"/>
    <lineage>
        <taxon>Bacteria</taxon>
        <taxon>Pseudomonadati</taxon>
        <taxon>Pseudomonadota</taxon>
        <taxon>Gammaproteobacteria</taxon>
        <taxon>Enterobacterales</taxon>
        <taxon>Enterobacteriaceae</taxon>
        <taxon>Shigella</taxon>
    </lineage>
</organism>
<feature type="chain" id="PRO_0000256615" description="Trigger factor">
    <location>
        <begin position="1"/>
        <end position="432"/>
    </location>
</feature>
<feature type="domain" description="PPIase FKBP-type" evidence="1">
    <location>
        <begin position="161"/>
        <end position="246"/>
    </location>
</feature>
<proteinExistence type="inferred from homology"/>
<comment type="function">
    <text evidence="1">Involved in protein export. Acts as a chaperone by maintaining the newly synthesized protein in an open conformation. Functions as a peptidyl-prolyl cis-trans isomerase.</text>
</comment>
<comment type="catalytic activity">
    <reaction evidence="1">
        <text>[protein]-peptidylproline (omega=180) = [protein]-peptidylproline (omega=0)</text>
        <dbReference type="Rhea" id="RHEA:16237"/>
        <dbReference type="Rhea" id="RHEA-COMP:10747"/>
        <dbReference type="Rhea" id="RHEA-COMP:10748"/>
        <dbReference type="ChEBI" id="CHEBI:83833"/>
        <dbReference type="ChEBI" id="CHEBI:83834"/>
        <dbReference type="EC" id="5.2.1.8"/>
    </reaction>
</comment>
<comment type="subunit">
    <text evidence="1">Homodimer and monomer. In vivo most of the ribosomes are in complex with monomeric TF. Uncomplexed TF, however, is in a monomer-dimer equilibrium with approximately two thirds of TF existing in a dimeric state.</text>
</comment>
<comment type="subcellular location">
    <subcellularLocation>
        <location>Cytoplasm</location>
    </subcellularLocation>
    <text evidence="1">About half TF is bound to the ribosome near the polypeptide exit tunnel while the other half is free in the cytoplasm.</text>
</comment>
<comment type="domain">
    <text evidence="1">Consists of 3 domains; the N-terminus binds the ribosome, the middle domain has PPIase activity, while the C-terminus has intrinsic chaperone activity on its own.</text>
</comment>
<comment type="similarity">
    <text evidence="1">Belongs to the FKBP-type PPIase family. Tig subfamily.</text>
</comment>
<evidence type="ECO:0000255" key="1">
    <source>
        <dbReference type="HAMAP-Rule" id="MF_00303"/>
    </source>
</evidence>
<sequence length="432" mass="48253">MQVSVETTQGLGRRVTITIAADSIETAVKSELVNVAKKVRIDGFRKGKVPMNIVAQRYGASVRQDVLGDLMSRNFIDAIIKEKINPAGAPTYVPGEYKLGEDFTYSVEFEVYPEVELQGLEAIEVEKPIVEVTDADVDGMLDTLRKQQATWKEKDSAVEAEDRVTIDFTGSVDSEEFEGGKASDFVLAMGQGRMIPGFEDGIKGHKAGEEFTIDVTFPEEYHAENLKGKAAKFAINLKKVEERELPELTAEFIKRFGVEDGSVEGLRAEVRKNMERELKSAIRNRVKSQAIEGLVKANDIDVPAALIDSEIDVLRRQAAQRFGGNEKQALELPRELFEEQAKRRVVVGLLLGEVIRTNELKADEERVKGLIEEMASAYEDPKEVIEFYSKNKELMDNMRNVALEEQAVEAVLAKAKVTEKETTFNELMNQQA</sequence>
<keyword id="KW-0131">Cell cycle</keyword>
<keyword id="KW-0132">Cell division</keyword>
<keyword id="KW-0143">Chaperone</keyword>
<keyword id="KW-0963">Cytoplasm</keyword>
<keyword id="KW-0413">Isomerase</keyword>
<keyword id="KW-0697">Rotamase</keyword>
<name>TIG_SHIBS</name>
<accession>Q325G5</accession>
<gene>
    <name evidence="1" type="primary">tig</name>
    <name type="ordered locus">SBO_0330</name>
</gene>
<protein>
    <recommendedName>
        <fullName evidence="1">Trigger factor</fullName>
        <shortName evidence="1">TF</shortName>
        <ecNumber evidence="1">5.2.1.8</ecNumber>
    </recommendedName>
    <alternativeName>
        <fullName evidence="1">PPIase</fullName>
    </alternativeName>
</protein>